<feature type="initiator methionine" description="Removed" evidence="1">
    <location>
        <position position="1"/>
    </location>
</feature>
<feature type="chain" id="PRO_0000288486" description="Cytosolic iron-sulfur assembly component 3">
    <location>
        <begin position="2"/>
        <end position="476"/>
    </location>
</feature>
<feature type="region of interest" description="Disordered" evidence="3">
    <location>
        <begin position="297"/>
        <end position="316"/>
    </location>
</feature>
<feature type="binding site" evidence="2">
    <location>
        <position position="24"/>
    </location>
    <ligand>
        <name>[4Fe-4S] cluster</name>
        <dbReference type="ChEBI" id="CHEBI:49883"/>
        <label>1</label>
    </ligand>
</feature>
<feature type="binding site" evidence="2">
    <location>
        <position position="71"/>
    </location>
    <ligand>
        <name>[4Fe-4S] cluster</name>
        <dbReference type="ChEBI" id="CHEBI:49883"/>
        <label>1</label>
    </ligand>
</feature>
<feature type="binding site" evidence="2">
    <location>
        <position position="74"/>
    </location>
    <ligand>
        <name>[4Fe-4S] cluster</name>
        <dbReference type="ChEBI" id="CHEBI:49883"/>
        <label>1</label>
    </ligand>
</feature>
<feature type="binding site" evidence="2">
    <location>
        <position position="77"/>
    </location>
    <ligand>
        <name>[4Fe-4S] cluster</name>
        <dbReference type="ChEBI" id="CHEBI:49883"/>
        <label>1</label>
    </ligand>
</feature>
<feature type="binding site" evidence="2">
    <location>
        <position position="190"/>
    </location>
    <ligand>
        <name>[4Fe-4S] cluster</name>
        <dbReference type="ChEBI" id="CHEBI:49883"/>
        <label>2</label>
    </ligand>
</feature>
<feature type="binding site" evidence="2">
    <location>
        <position position="246"/>
    </location>
    <ligand>
        <name>[4Fe-4S] cluster</name>
        <dbReference type="ChEBI" id="CHEBI:49883"/>
        <label>2</label>
    </ligand>
</feature>
<feature type="binding site" evidence="2">
    <location>
        <position position="395"/>
    </location>
    <ligand>
        <name>[4Fe-4S] cluster</name>
        <dbReference type="ChEBI" id="CHEBI:49883"/>
        <label>2</label>
    </ligand>
</feature>
<feature type="binding site" evidence="2">
    <location>
        <position position="399"/>
    </location>
    <ligand>
        <name>[4Fe-4S] cluster</name>
        <dbReference type="ChEBI" id="CHEBI:49883"/>
        <label>2</label>
    </ligand>
</feature>
<feature type="modified residue" description="N-acetylalanine" evidence="1">
    <location>
        <position position="2"/>
    </location>
</feature>
<feature type="splice variant" id="VSP_025696" description="In isoform 2." evidence="4">
    <original>L</original>
    <variation>LDLSCVAPPALTRPSPR</variation>
    <location>
        <position position="299"/>
    </location>
</feature>
<feature type="sequence conflict" description="In Ref. 2; AAH52830." evidence="5" ref="2">
    <original>V</original>
    <variation>A</variation>
    <location>
        <position position="286"/>
    </location>
</feature>
<feature type="sequence conflict" description="In Ref. 1; BAB29126." evidence="5" ref="1">
    <original>K</original>
    <variation>T</variation>
    <location>
        <position position="407"/>
    </location>
</feature>
<feature type="sequence conflict" description="In Ref. 1; BAC31620." evidence="5" ref="1">
    <original>E</original>
    <variation>G</variation>
    <location>
        <position position="430"/>
    </location>
</feature>
<comment type="function">
    <text evidence="1">Component of the cytosolic iron-sulfur protein assembly (CIA) complex, a multiprotein complex that mediates the incorporation of iron-sulfur cluster into extramitochondrial Fe/S proteins. Seems to negatively regulate the level of HIF1A expression, although this effect could be indirect (By similarity).</text>
</comment>
<comment type="subunit">
    <text evidence="1">External component of the CIA complex. In the CIA complex, interacts directly with CIAO1 and MMS19.</text>
</comment>
<comment type="alternative products">
    <event type="alternative splicing"/>
    <isoform>
        <id>Q7TMW6-1</id>
        <name>1</name>
        <sequence type="displayed"/>
    </isoform>
    <isoform>
        <id>Q7TMW6-2</id>
        <name>2</name>
        <sequence type="described" ref="VSP_025696"/>
    </isoform>
</comment>
<comment type="similarity">
    <text evidence="5">Belongs to the NARF family.</text>
</comment>
<organism>
    <name type="scientific">Mus musculus</name>
    <name type="common">Mouse</name>
    <dbReference type="NCBI Taxonomy" id="10090"/>
    <lineage>
        <taxon>Eukaryota</taxon>
        <taxon>Metazoa</taxon>
        <taxon>Chordata</taxon>
        <taxon>Craniata</taxon>
        <taxon>Vertebrata</taxon>
        <taxon>Euteleostomi</taxon>
        <taxon>Mammalia</taxon>
        <taxon>Eutheria</taxon>
        <taxon>Euarchontoglires</taxon>
        <taxon>Glires</taxon>
        <taxon>Rodentia</taxon>
        <taxon>Myomorpha</taxon>
        <taxon>Muroidea</taxon>
        <taxon>Muridae</taxon>
        <taxon>Murinae</taxon>
        <taxon>Mus</taxon>
        <taxon>Mus</taxon>
    </lineage>
</organism>
<reference key="1">
    <citation type="journal article" date="2005" name="Science">
        <title>The transcriptional landscape of the mammalian genome.</title>
        <authorList>
            <person name="Carninci P."/>
            <person name="Kasukawa T."/>
            <person name="Katayama S."/>
            <person name="Gough J."/>
            <person name="Frith M.C."/>
            <person name="Maeda N."/>
            <person name="Oyama R."/>
            <person name="Ravasi T."/>
            <person name="Lenhard B."/>
            <person name="Wells C."/>
            <person name="Kodzius R."/>
            <person name="Shimokawa K."/>
            <person name="Bajic V.B."/>
            <person name="Brenner S.E."/>
            <person name="Batalov S."/>
            <person name="Forrest A.R."/>
            <person name="Zavolan M."/>
            <person name="Davis M.J."/>
            <person name="Wilming L.G."/>
            <person name="Aidinis V."/>
            <person name="Allen J.E."/>
            <person name="Ambesi-Impiombato A."/>
            <person name="Apweiler R."/>
            <person name="Aturaliya R.N."/>
            <person name="Bailey T.L."/>
            <person name="Bansal M."/>
            <person name="Baxter L."/>
            <person name="Beisel K.W."/>
            <person name="Bersano T."/>
            <person name="Bono H."/>
            <person name="Chalk A.M."/>
            <person name="Chiu K.P."/>
            <person name="Choudhary V."/>
            <person name="Christoffels A."/>
            <person name="Clutterbuck D.R."/>
            <person name="Crowe M.L."/>
            <person name="Dalla E."/>
            <person name="Dalrymple B.P."/>
            <person name="de Bono B."/>
            <person name="Della Gatta G."/>
            <person name="di Bernardo D."/>
            <person name="Down T."/>
            <person name="Engstrom P."/>
            <person name="Fagiolini M."/>
            <person name="Faulkner G."/>
            <person name="Fletcher C.F."/>
            <person name="Fukushima T."/>
            <person name="Furuno M."/>
            <person name="Futaki S."/>
            <person name="Gariboldi M."/>
            <person name="Georgii-Hemming P."/>
            <person name="Gingeras T.R."/>
            <person name="Gojobori T."/>
            <person name="Green R.E."/>
            <person name="Gustincich S."/>
            <person name="Harbers M."/>
            <person name="Hayashi Y."/>
            <person name="Hensch T.K."/>
            <person name="Hirokawa N."/>
            <person name="Hill D."/>
            <person name="Huminiecki L."/>
            <person name="Iacono M."/>
            <person name="Ikeo K."/>
            <person name="Iwama A."/>
            <person name="Ishikawa T."/>
            <person name="Jakt M."/>
            <person name="Kanapin A."/>
            <person name="Katoh M."/>
            <person name="Kawasawa Y."/>
            <person name="Kelso J."/>
            <person name="Kitamura H."/>
            <person name="Kitano H."/>
            <person name="Kollias G."/>
            <person name="Krishnan S.P."/>
            <person name="Kruger A."/>
            <person name="Kummerfeld S.K."/>
            <person name="Kurochkin I.V."/>
            <person name="Lareau L.F."/>
            <person name="Lazarevic D."/>
            <person name="Lipovich L."/>
            <person name="Liu J."/>
            <person name="Liuni S."/>
            <person name="McWilliam S."/>
            <person name="Madan Babu M."/>
            <person name="Madera M."/>
            <person name="Marchionni L."/>
            <person name="Matsuda H."/>
            <person name="Matsuzawa S."/>
            <person name="Miki H."/>
            <person name="Mignone F."/>
            <person name="Miyake S."/>
            <person name="Morris K."/>
            <person name="Mottagui-Tabar S."/>
            <person name="Mulder N."/>
            <person name="Nakano N."/>
            <person name="Nakauchi H."/>
            <person name="Ng P."/>
            <person name="Nilsson R."/>
            <person name="Nishiguchi S."/>
            <person name="Nishikawa S."/>
            <person name="Nori F."/>
            <person name="Ohara O."/>
            <person name="Okazaki Y."/>
            <person name="Orlando V."/>
            <person name="Pang K.C."/>
            <person name="Pavan W.J."/>
            <person name="Pavesi G."/>
            <person name="Pesole G."/>
            <person name="Petrovsky N."/>
            <person name="Piazza S."/>
            <person name="Reed J."/>
            <person name="Reid J.F."/>
            <person name="Ring B.Z."/>
            <person name="Ringwald M."/>
            <person name="Rost B."/>
            <person name="Ruan Y."/>
            <person name="Salzberg S.L."/>
            <person name="Sandelin A."/>
            <person name="Schneider C."/>
            <person name="Schoenbach C."/>
            <person name="Sekiguchi K."/>
            <person name="Semple C.A."/>
            <person name="Seno S."/>
            <person name="Sessa L."/>
            <person name="Sheng Y."/>
            <person name="Shibata Y."/>
            <person name="Shimada H."/>
            <person name="Shimada K."/>
            <person name="Silva D."/>
            <person name="Sinclair B."/>
            <person name="Sperling S."/>
            <person name="Stupka E."/>
            <person name="Sugiura K."/>
            <person name="Sultana R."/>
            <person name="Takenaka Y."/>
            <person name="Taki K."/>
            <person name="Tammoja K."/>
            <person name="Tan S.L."/>
            <person name="Tang S."/>
            <person name="Taylor M.S."/>
            <person name="Tegner J."/>
            <person name="Teichmann S.A."/>
            <person name="Ueda H.R."/>
            <person name="van Nimwegen E."/>
            <person name="Verardo R."/>
            <person name="Wei C.L."/>
            <person name="Yagi K."/>
            <person name="Yamanishi H."/>
            <person name="Zabarovsky E."/>
            <person name="Zhu S."/>
            <person name="Zimmer A."/>
            <person name="Hide W."/>
            <person name="Bult C."/>
            <person name="Grimmond S.M."/>
            <person name="Teasdale R.D."/>
            <person name="Liu E.T."/>
            <person name="Brusic V."/>
            <person name="Quackenbush J."/>
            <person name="Wahlestedt C."/>
            <person name="Mattick J.S."/>
            <person name="Hume D.A."/>
            <person name="Kai C."/>
            <person name="Sasaki D."/>
            <person name="Tomaru Y."/>
            <person name="Fukuda S."/>
            <person name="Kanamori-Katayama M."/>
            <person name="Suzuki M."/>
            <person name="Aoki J."/>
            <person name="Arakawa T."/>
            <person name="Iida J."/>
            <person name="Imamura K."/>
            <person name="Itoh M."/>
            <person name="Kato T."/>
            <person name="Kawaji H."/>
            <person name="Kawagashira N."/>
            <person name="Kawashima T."/>
            <person name="Kojima M."/>
            <person name="Kondo S."/>
            <person name="Konno H."/>
            <person name="Nakano K."/>
            <person name="Ninomiya N."/>
            <person name="Nishio T."/>
            <person name="Okada M."/>
            <person name="Plessy C."/>
            <person name="Shibata K."/>
            <person name="Shiraki T."/>
            <person name="Suzuki S."/>
            <person name="Tagami M."/>
            <person name="Waki K."/>
            <person name="Watahiki A."/>
            <person name="Okamura-Oho Y."/>
            <person name="Suzuki H."/>
            <person name="Kawai J."/>
            <person name="Hayashizaki Y."/>
        </authorList>
    </citation>
    <scope>NUCLEOTIDE SEQUENCE [LARGE SCALE MRNA] (ISOFORMS 1 AND 2)</scope>
    <source>
        <strain>C57BL/6J</strain>
        <tissue>Brain cortex</tissue>
        <tissue>Colon</tissue>
        <tissue>Head</tissue>
    </source>
</reference>
<reference key="2">
    <citation type="journal article" date="2004" name="Genome Res.">
        <title>The status, quality, and expansion of the NIH full-length cDNA project: the Mammalian Gene Collection (MGC).</title>
        <authorList>
            <consortium name="The MGC Project Team"/>
        </authorList>
    </citation>
    <scope>NUCLEOTIDE SEQUENCE [LARGE SCALE MRNA] (ISOFORM 1)</scope>
    <source>
        <strain>C57BL/6NCr</strain>
        <tissue>Hematopoietic stem cell</tissue>
    </source>
</reference>
<reference key="3">
    <citation type="journal article" date="2010" name="Cell">
        <title>A tissue-specific atlas of mouse protein phosphorylation and expression.</title>
        <authorList>
            <person name="Huttlin E.L."/>
            <person name="Jedrychowski M.P."/>
            <person name="Elias J.E."/>
            <person name="Goswami T."/>
            <person name="Rad R."/>
            <person name="Beausoleil S.A."/>
            <person name="Villen J."/>
            <person name="Haas W."/>
            <person name="Sowa M.E."/>
            <person name="Gygi S.P."/>
        </authorList>
    </citation>
    <scope>IDENTIFICATION BY MASS SPECTROMETRY [LARGE SCALE ANALYSIS]</scope>
    <source>
        <tissue>Brown adipose tissue</tissue>
        <tissue>Kidney</tissue>
        <tissue>Pancreas</tissue>
        <tissue>Spleen</tissue>
    </source>
</reference>
<keyword id="KW-0004">4Fe-4S</keyword>
<keyword id="KW-0007">Acetylation</keyword>
<keyword id="KW-0025">Alternative splicing</keyword>
<keyword id="KW-0408">Iron</keyword>
<keyword id="KW-0411">Iron-sulfur</keyword>
<keyword id="KW-0479">Metal-binding</keyword>
<keyword id="KW-1185">Reference proteome</keyword>
<protein>
    <recommendedName>
        <fullName evidence="5">Cytosolic iron-sulfur assembly component 3</fullName>
    </recommendedName>
    <alternativeName>
        <fullName>Cytosolic Fe-S cluster assembly factor NARFL</fullName>
    </alternativeName>
    <alternativeName>
        <fullName>Iron-only hydrogenase-like protein 1</fullName>
        <shortName>IOP1</shortName>
    </alternativeName>
    <alternativeName>
        <fullName>Nuclear prelamin A recognition factor-like protein</fullName>
    </alternativeName>
</protein>
<accession>Q7TMW6</accession>
<accession>Q3ULM7</accession>
<accession>Q8BRR3</accession>
<accession>Q9CXS6</accession>
<accession>Q9D320</accession>
<name>CIAO3_MOUSE</name>
<evidence type="ECO:0000250" key="1">
    <source>
        <dbReference type="UniProtKB" id="Q9H6Q4"/>
    </source>
</evidence>
<evidence type="ECO:0000255" key="2"/>
<evidence type="ECO:0000256" key="3">
    <source>
        <dbReference type="SAM" id="MobiDB-lite"/>
    </source>
</evidence>
<evidence type="ECO:0000303" key="4">
    <source>
    </source>
</evidence>
<evidence type="ECO:0000305" key="5"/>
<evidence type="ECO:0000312" key="6">
    <source>
        <dbReference type="MGI" id="MGI:1914813"/>
    </source>
</evidence>
<sequence>MASPFSGALQLTDLDDFIGPSQNCIKPVKVAKKPGSGIAKIHIEDDGSYFQVNQDGRTQKLEKAKVSLNDCLACSGCVTSAETVLITQQSHEELRKVLDANKEAAPGQQRLVVVSISPQSRASLAARFRLDPTDTARKLTSFFKKIGVHFVFDTAFARNFSLLESQKEFVQRFREQANSREALPVLASACPGWICYAEKTHGNFILPYISTARSPQQVMGSLVKDFFAQQQLLTPDKIYHVTVMPCYDKKLEASRPDFFNQEYQTRDVDCVLTTGEVFRLLEEEGVSLTELEPAPLDGLTSSVSAEEPSSHRGGGSGGYLEHVFRHAAQELFGIHVAEVTYQPLRNKDFQEVTLEREGQVLLRFAVAYGFRNIQNLVQKLKRGRCPYHYVEVMACPSGCLNGGGQLKAPDTEGSELLQQLERLYSMVRTEAPEDAPGVQELYQHWLQGEDSERASRLLHTQYHAVEKPSSGLSIRW</sequence>
<dbReference type="EMBL" id="AK014038">
    <property type="protein sequence ID" value="BAB29126.1"/>
    <property type="molecule type" value="mRNA"/>
</dbReference>
<dbReference type="EMBL" id="AK018548">
    <property type="protein sequence ID" value="BAB31268.1"/>
    <property type="molecule type" value="mRNA"/>
</dbReference>
<dbReference type="EMBL" id="AK043694">
    <property type="protein sequence ID" value="BAC31620.1"/>
    <property type="molecule type" value="mRNA"/>
</dbReference>
<dbReference type="EMBL" id="AK145408">
    <property type="protein sequence ID" value="BAE26421.1"/>
    <property type="molecule type" value="mRNA"/>
</dbReference>
<dbReference type="EMBL" id="BC052830">
    <property type="protein sequence ID" value="AAH52830.1"/>
    <property type="molecule type" value="mRNA"/>
</dbReference>
<dbReference type="CCDS" id="CCDS50034.1">
    <molecule id="Q7TMW6-1"/>
</dbReference>
<dbReference type="RefSeq" id="NP_080514.3">
    <molecule id="Q7TMW6-1"/>
    <property type="nucleotide sequence ID" value="NM_026238.4"/>
</dbReference>
<dbReference type="SMR" id="Q7TMW6"/>
<dbReference type="BioGRID" id="212278">
    <property type="interactions" value="1"/>
</dbReference>
<dbReference type="FunCoup" id="Q7TMW6">
    <property type="interactions" value="277"/>
</dbReference>
<dbReference type="STRING" id="10090.ENSMUSP00000002350"/>
<dbReference type="iPTMnet" id="Q7TMW6"/>
<dbReference type="PhosphoSitePlus" id="Q7TMW6"/>
<dbReference type="SwissPalm" id="Q7TMW6"/>
<dbReference type="PaxDb" id="10090-ENSMUSP00000002350"/>
<dbReference type="PeptideAtlas" id="Q7TMW6"/>
<dbReference type="ProteomicsDB" id="252775">
    <molecule id="Q7TMW6-1"/>
</dbReference>
<dbReference type="ProteomicsDB" id="252776">
    <molecule id="Q7TMW6-2"/>
</dbReference>
<dbReference type="Pumba" id="Q7TMW6"/>
<dbReference type="Antibodypedia" id="42404">
    <property type="antibodies" value="184 antibodies from 28 providers"/>
</dbReference>
<dbReference type="Ensembl" id="ENSMUST00000002350.11">
    <molecule id="Q7TMW6-1"/>
    <property type="protein sequence ID" value="ENSMUSP00000002350.5"/>
    <property type="gene ID" value="ENSMUSG00000002280.12"/>
</dbReference>
<dbReference type="Ensembl" id="ENSMUST00000134108.8">
    <molecule id="Q7TMW6-2"/>
    <property type="protein sequence ID" value="ENSMUSP00000117136.2"/>
    <property type="gene ID" value="ENSMUSG00000002280.12"/>
</dbReference>
<dbReference type="GeneID" id="67563"/>
<dbReference type="KEGG" id="mmu:67563"/>
<dbReference type="UCSC" id="uc008bbq.2">
    <molecule id="Q7TMW6-1"/>
    <property type="organism name" value="mouse"/>
</dbReference>
<dbReference type="UCSC" id="uc012anj.1">
    <molecule id="Q7TMW6-2"/>
    <property type="organism name" value="mouse"/>
</dbReference>
<dbReference type="AGR" id="MGI:1914813"/>
<dbReference type="CTD" id="64428"/>
<dbReference type="MGI" id="MGI:1914813">
    <property type="gene designation" value="Ciao3"/>
</dbReference>
<dbReference type="VEuPathDB" id="HostDB:ENSMUSG00000002280"/>
<dbReference type="eggNOG" id="KOG2439">
    <property type="taxonomic scope" value="Eukaryota"/>
</dbReference>
<dbReference type="GeneTree" id="ENSGT00940000153514"/>
<dbReference type="HOGENOM" id="CLU_018240_0_0_1"/>
<dbReference type="InParanoid" id="Q7TMW6"/>
<dbReference type="OMA" id="GYLHHVL"/>
<dbReference type="OrthoDB" id="21680at9989"/>
<dbReference type="PhylomeDB" id="Q7TMW6"/>
<dbReference type="TreeFam" id="TF106273"/>
<dbReference type="BioGRID-ORCS" id="67563">
    <property type="hits" value="29 hits in 79 CRISPR screens"/>
</dbReference>
<dbReference type="PRO" id="PR:Q7TMW6"/>
<dbReference type="Proteomes" id="UP000000589">
    <property type="component" value="Chromosome 17"/>
</dbReference>
<dbReference type="RNAct" id="Q7TMW6">
    <property type="molecule type" value="protein"/>
</dbReference>
<dbReference type="Bgee" id="ENSMUSG00000002280">
    <property type="expression patterns" value="Expressed in proximal tubule and 71 other cell types or tissues"/>
</dbReference>
<dbReference type="ExpressionAtlas" id="Q7TMW6">
    <property type="expression patterns" value="baseline and differential"/>
</dbReference>
<dbReference type="GO" id="GO:0097361">
    <property type="term" value="C:cytosolic [4Fe-4S] assembly targeting complex"/>
    <property type="evidence" value="ECO:0000250"/>
    <property type="project" value="UniProtKB"/>
</dbReference>
<dbReference type="GO" id="GO:0051539">
    <property type="term" value="F:4 iron, 4 sulfur cluster binding"/>
    <property type="evidence" value="ECO:0007669"/>
    <property type="project" value="UniProtKB-KW"/>
</dbReference>
<dbReference type="GO" id="GO:0046872">
    <property type="term" value="F:metal ion binding"/>
    <property type="evidence" value="ECO:0007669"/>
    <property type="project" value="UniProtKB-KW"/>
</dbReference>
<dbReference type="GO" id="GO:0002244">
    <property type="term" value="P:hematopoietic progenitor cell differentiation"/>
    <property type="evidence" value="ECO:0000315"/>
    <property type="project" value="MGI"/>
</dbReference>
<dbReference type="GO" id="GO:0032364">
    <property type="term" value="P:intracellular oxygen homeostasis"/>
    <property type="evidence" value="ECO:0007669"/>
    <property type="project" value="Ensembl"/>
</dbReference>
<dbReference type="GO" id="GO:0016226">
    <property type="term" value="P:iron-sulfur cluster assembly"/>
    <property type="evidence" value="ECO:0000315"/>
    <property type="project" value="MGI"/>
</dbReference>
<dbReference type="GO" id="GO:0010468">
    <property type="term" value="P:regulation of gene expression"/>
    <property type="evidence" value="ECO:0007669"/>
    <property type="project" value="Ensembl"/>
</dbReference>
<dbReference type="GO" id="GO:0001666">
    <property type="term" value="P:response to hypoxia"/>
    <property type="evidence" value="ECO:0007669"/>
    <property type="project" value="Ensembl"/>
</dbReference>
<dbReference type="FunFam" id="3.30.70.20:FF:000042">
    <property type="entry name" value="Cytosolic Fe-S cluster assembly factor NAR1"/>
    <property type="match status" value="1"/>
</dbReference>
<dbReference type="Gene3D" id="3.40.50.1780">
    <property type="match status" value="1"/>
</dbReference>
<dbReference type="Gene3D" id="3.40.950.10">
    <property type="entry name" value="Fe-only Hydrogenase (Larger Subunit), Chain L, domain 3"/>
    <property type="match status" value="1"/>
</dbReference>
<dbReference type="InterPro" id="IPR050340">
    <property type="entry name" value="Cytosolic_Fe-S_CAF"/>
</dbReference>
<dbReference type="InterPro" id="IPR009016">
    <property type="entry name" value="Fe_hydrogenase"/>
</dbReference>
<dbReference type="InterPro" id="IPR004108">
    <property type="entry name" value="Fe_hydrogenase_lsu_C"/>
</dbReference>
<dbReference type="InterPro" id="IPR003149">
    <property type="entry name" value="Fe_hydrogenase_ssu"/>
</dbReference>
<dbReference type="PANTHER" id="PTHR11615">
    <property type="entry name" value="NITRATE, FORMATE, IRON DEHYDROGENASE"/>
    <property type="match status" value="1"/>
</dbReference>
<dbReference type="Pfam" id="PF02906">
    <property type="entry name" value="Fe_hyd_lg_C"/>
    <property type="match status" value="1"/>
</dbReference>
<dbReference type="Pfam" id="PF02256">
    <property type="entry name" value="Fe_hyd_SSU"/>
    <property type="match status" value="1"/>
</dbReference>
<dbReference type="SMART" id="SM00902">
    <property type="entry name" value="Fe_hyd_SSU"/>
    <property type="match status" value="1"/>
</dbReference>
<dbReference type="SUPFAM" id="SSF53920">
    <property type="entry name" value="Fe-only hydrogenase"/>
    <property type="match status" value="1"/>
</dbReference>
<proteinExistence type="evidence at protein level"/>
<gene>
    <name type="primary">Ciao3</name>
    <name evidence="6" type="synonym">Narfl</name>
</gene>